<accession>Q9CMQ4</accession>
<protein>
    <recommendedName>
        <fullName evidence="1">Ribosome maturation factor RimP</fullName>
    </recommendedName>
</protein>
<comment type="function">
    <text evidence="1">Required for maturation of 30S ribosomal subunits.</text>
</comment>
<comment type="subcellular location">
    <subcellularLocation>
        <location evidence="1">Cytoplasm</location>
    </subcellularLocation>
</comment>
<comment type="similarity">
    <text evidence="1">Belongs to the RimP family.</text>
</comment>
<comment type="sequence caution" evidence="2">
    <conflict type="erroneous initiation">
        <sequence resource="EMBL-CDS" id="AAK02845"/>
    </conflict>
</comment>
<proteinExistence type="inferred from homology"/>
<gene>
    <name evidence="1" type="primary">rimP</name>
    <name type="ordered locus">PM0761</name>
</gene>
<feature type="chain" id="PRO_0000181898" description="Ribosome maturation factor RimP">
    <location>
        <begin position="1"/>
        <end position="151"/>
    </location>
</feature>
<keyword id="KW-0963">Cytoplasm</keyword>
<keyword id="KW-1185">Reference proteome</keyword>
<keyword id="KW-0690">Ribosome biogenesis</keyword>
<evidence type="ECO:0000255" key="1">
    <source>
        <dbReference type="HAMAP-Rule" id="MF_01077"/>
    </source>
</evidence>
<evidence type="ECO:0000305" key="2"/>
<reference key="1">
    <citation type="journal article" date="2001" name="Proc. Natl. Acad. Sci. U.S.A.">
        <title>Complete genomic sequence of Pasteurella multocida Pm70.</title>
        <authorList>
            <person name="May B.J."/>
            <person name="Zhang Q."/>
            <person name="Li L.L."/>
            <person name="Paustian M.L."/>
            <person name="Whittam T.S."/>
            <person name="Kapur V."/>
        </authorList>
    </citation>
    <scope>NUCLEOTIDE SEQUENCE [LARGE SCALE GENOMIC DNA]</scope>
    <source>
        <strain>Pm70</strain>
    </source>
</reference>
<name>RIMP_PASMU</name>
<organism>
    <name type="scientific">Pasteurella multocida (strain Pm70)</name>
    <dbReference type="NCBI Taxonomy" id="272843"/>
    <lineage>
        <taxon>Bacteria</taxon>
        <taxon>Pseudomonadati</taxon>
        <taxon>Pseudomonadota</taxon>
        <taxon>Gammaproteobacteria</taxon>
        <taxon>Pasteurellales</taxon>
        <taxon>Pasteurellaceae</taxon>
        <taxon>Pasteurella</taxon>
    </lineage>
</organism>
<dbReference type="EMBL" id="AE004439">
    <property type="protein sequence ID" value="AAK02845.1"/>
    <property type="status" value="ALT_INIT"/>
    <property type="molecule type" value="Genomic_DNA"/>
</dbReference>
<dbReference type="RefSeq" id="WP_005726752.1">
    <property type="nucleotide sequence ID" value="NC_002663.1"/>
</dbReference>
<dbReference type="SMR" id="Q9CMQ4"/>
<dbReference type="STRING" id="272843.PM0761"/>
<dbReference type="EnsemblBacteria" id="AAK02845">
    <property type="protein sequence ID" value="AAK02845"/>
    <property type="gene ID" value="PM0761"/>
</dbReference>
<dbReference type="GeneID" id="77207811"/>
<dbReference type="KEGG" id="pmu:PM0761"/>
<dbReference type="HOGENOM" id="CLU_070525_1_1_6"/>
<dbReference type="OrthoDB" id="9805006at2"/>
<dbReference type="Proteomes" id="UP000000809">
    <property type="component" value="Chromosome"/>
</dbReference>
<dbReference type="GO" id="GO:0005829">
    <property type="term" value="C:cytosol"/>
    <property type="evidence" value="ECO:0007669"/>
    <property type="project" value="TreeGrafter"/>
</dbReference>
<dbReference type="GO" id="GO:0000028">
    <property type="term" value="P:ribosomal small subunit assembly"/>
    <property type="evidence" value="ECO:0007669"/>
    <property type="project" value="TreeGrafter"/>
</dbReference>
<dbReference type="GO" id="GO:0006412">
    <property type="term" value="P:translation"/>
    <property type="evidence" value="ECO:0007669"/>
    <property type="project" value="TreeGrafter"/>
</dbReference>
<dbReference type="CDD" id="cd01734">
    <property type="entry name" value="YlxS_C"/>
    <property type="match status" value="1"/>
</dbReference>
<dbReference type="FunFam" id="3.30.300.70:FF:000001">
    <property type="entry name" value="Ribosome maturation factor RimP"/>
    <property type="match status" value="1"/>
</dbReference>
<dbReference type="Gene3D" id="2.30.30.180">
    <property type="entry name" value="Ribosome maturation factor RimP, C-terminal domain"/>
    <property type="match status" value="1"/>
</dbReference>
<dbReference type="Gene3D" id="3.30.300.70">
    <property type="entry name" value="RimP-like superfamily, N-terminal"/>
    <property type="match status" value="1"/>
</dbReference>
<dbReference type="HAMAP" id="MF_01077">
    <property type="entry name" value="RimP"/>
    <property type="match status" value="1"/>
</dbReference>
<dbReference type="InterPro" id="IPR003728">
    <property type="entry name" value="Ribosome_maturation_RimP"/>
</dbReference>
<dbReference type="InterPro" id="IPR028998">
    <property type="entry name" value="RimP_C"/>
</dbReference>
<dbReference type="InterPro" id="IPR036847">
    <property type="entry name" value="RimP_C_sf"/>
</dbReference>
<dbReference type="InterPro" id="IPR028989">
    <property type="entry name" value="RimP_N"/>
</dbReference>
<dbReference type="InterPro" id="IPR035956">
    <property type="entry name" value="RimP_N_sf"/>
</dbReference>
<dbReference type="NCBIfam" id="NF000927">
    <property type="entry name" value="PRK00092.1-1"/>
    <property type="match status" value="1"/>
</dbReference>
<dbReference type="PANTHER" id="PTHR33867">
    <property type="entry name" value="RIBOSOME MATURATION FACTOR RIMP"/>
    <property type="match status" value="1"/>
</dbReference>
<dbReference type="PANTHER" id="PTHR33867:SF1">
    <property type="entry name" value="RIBOSOME MATURATION FACTOR RIMP"/>
    <property type="match status" value="1"/>
</dbReference>
<dbReference type="Pfam" id="PF17384">
    <property type="entry name" value="DUF150_C"/>
    <property type="match status" value="1"/>
</dbReference>
<dbReference type="Pfam" id="PF02576">
    <property type="entry name" value="RimP_N"/>
    <property type="match status" value="1"/>
</dbReference>
<dbReference type="SUPFAM" id="SSF74942">
    <property type="entry name" value="YhbC-like, C-terminal domain"/>
    <property type="match status" value="1"/>
</dbReference>
<dbReference type="SUPFAM" id="SSF75420">
    <property type="entry name" value="YhbC-like, N-terminal domain"/>
    <property type="match status" value="1"/>
</dbReference>
<sequence length="151" mass="17236">MATLEQKLQELLQSSVEDLGCELWGIECQRAGRYLTVRLYIDKEGGVTVEDCADVSRQVSAILDVEDPIADKYNLEVSSPGLDRALFTLDQYQRYIGQEIVVHLRIPVLDRRKWQGKLEKIENDMLTLIVDGQEQILVFGNIQKANIIPKF</sequence>